<organism>
    <name type="scientific">Mycobacterium tuberculosis (strain ATCC 25618 / H37Rv)</name>
    <dbReference type="NCBI Taxonomy" id="83332"/>
    <lineage>
        <taxon>Bacteria</taxon>
        <taxon>Bacillati</taxon>
        <taxon>Actinomycetota</taxon>
        <taxon>Actinomycetes</taxon>
        <taxon>Mycobacteriales</taxon>
        <taxon>Mycobacteriaceae</taxon>
        <taxon>Mycobacterium</taxon>
        <taxon>Mycobacterium tuberculosis complex</taxon>
    </lineage>
</organism>
<protein>
    <recommendedName>
        <fullName>Nicotinate phosphoribosyltransferase pncB2</fullName>
        <shortName>NAPRTase pncB2</shortName>
        <ecNumber>6.3.4.21</ecNumber>
    </recommendedName>
</protein>
<reference key="1">
    <citation type="journal article" date="1998" name="Nature">
        <title>Deciphering the biology of Mycobacterium tuberculosis from the complete genome sequence.</title>
        <authorList>
            <person name="Cole S.T."/>
            <person name="Brosch R."/>
            <person name="Parkhill J."/>
            <person name="Garnier T."/>
            <person name="Churcher C.M."/>
            <person name="Harris D.E."/>
            <person name="Gordon S.V."/>
            <person name="Eiglmeier K."/>
            <person name="Gas S."/>
            <person name="Barry C.E. III"/>
            <person name="Tekaia F."/>
            <person name="Badcock K."/>
            <person name="Basham D."/>
            <person name="Brown D."/>
            <person name="Chillingworth T."/>
            <person name="Connor R."/>
            <person name="Davies R.M."/>
            <person name="Devlin K."/>
            <person name="Feltwell T."/>
            <person name="Gentles S."/>
            <person name="Hamlin N."/>
            <person name="Holroyd S."/>
            <person name="Hornsby T."/>
            <person name="Jagels K."/>
            <person name="Krogh A."/>
            <person name="McLean J."/>
            <person name="Moule S."/>
            <person name="Murphy L.D."/>
            <person name="Oliver S."/>
            <person name="Osborne J."/>
            <person name="Quail M.A."/>
            <person name="Rajandream M.A."/>
            <person name="Rogers J."/>
            <person name="Rutter S."/>
            <person name="Seeger K."/>
            <person name="Skelton S."/>
            <person name="Squares S."/>
            <person name="Squares R."/>
            <person name="Sulston J.E."/>
            <person name="Taylor K."/>
            <person name="Whitehead S."/>
            <person name="Barrell B.G."/>
        </authorList>
    </citation>
    <scope>NUCLEOTIDE SEQUENCE [LARGE SCALE GENOMIC DNA]</scope>
    <source>
        <strain>ATCC 25618 / H37Rv</strain>
    </source>
</reference>
<reference key="2">
    <citation type="journal article" date="2003" name="J. Exp. Med.">
        <title>Inhibition of respiration by nitric oxide induces a Mycobacterium tuberculosis dormancy program.</title>
        <authorList>
            <person name="Voskuil M.I."/>
            <person name="Schnappinger D."/>
            <person name="Visconti K.C."/>
            <person name="Harrell M.I."/>
            <person name="Dolganov G.M."/>
            <person name="Sherman D.R."/>
            <person name="Schoolnik G.K."/>
        </authorList>
    </citation>
    <scope>INDUCTION BY NITRIC OXIDE (NO) AND BY HYPOXIA</scope>
    <scope>DORMANCY REGULON</scope>
    <source>
        <strain>ATCC 25618 / H37Rv</strain>
    </source>
</reference>
<reference key="3">
    <citation type="journal article" date="2008" name="Cell Host Microbe">
        <title>Mycobacterium tuberculosis senses host-derived carbon monoxide during macrophage infection.</title>
        <authorList>
            <person name="Shiloh M.U."/>
            <person name="Manzanillo P."/>
            <person name="Cox J.S."/>
        </authorList>
    </citation>
    <scope>INDUCTION BY CARBON MONOXIDE (CO)</scope>
    <source>
        <strain>ATCC 35801 / TMC 107 / Erdman</strain>
    </source>
</reference>
<reference key="4">
    <citation type="journal article" date="2008" name="J. Biol. Chem.">
        <title>Heme oxygenase-1-derived carbon monoxide induces the Mycobacterium tuberculosis dormancy regulon.</title>
        <authorList>
            <person name="Kumar A."/>
            <person name="Deshane J.S."/>
            <person name="Crossman D.K."/>
            <person name="Bolisetty S."/>
            <person name="Yan B.S."/>
            <person name="Kramnik I."/>
            <person name="Agarwal A."/>
            <person name="Steyn A.J."/>
        </authorList>
    </citation>
    <scope>INDUCTION BY CARBON MONOXIDE (CO)</scope>
    <scope>DORMANCY REGULON</scope>
    <source>
        <strain>ATCC 25618 / H37Rv</strain>
    </source>
</reference>
<reference key="5">
    <citation type="journal article" date="2008" name="J. Biol. Chem.">
        <title>Biosynthesis and recycling of nicotinamide cofactors in mycobacterium tuberculosis. An essential role for NAD in nonreplicating bacilli.</title>
        <authorList>
            <person name="Boshoff H.I."/>
            <person name="Xu X."/>
            <person name="Tahlan K."/>
            <person name="Dowd C.S."/>
            <person name="Pethe K."/>
            <person name="Camacho L.R."/>
            <person name="Park T.H."/>
            <person name="Yun C.S."/>
            <person name="Schnappinger D."/>
            <person name="Ehrt S."/>
            <person name="Williams K.J."/>
            <person name="Barry C.E. III"/>
        </authorList>
    </citation>
    <scope>FUNCTION</scope>
    <scope>CATALYTIC ACTIVITY</scope>
    <scope>DISRUPTION PHENOTYPE</scope>
    <scope>INDUCTION BY HYPOXIA</scope>
    <scope>SUBSTRATE SPECIFICITY</scope>
</reference>
<reference key="6">
    <citation type="journal article" date="2011" name="Mol. Cell. Proteomics">
        <title>Proteogenomic analysis of Mycobacterium tuberculosis by high resolution mass spectrometry.</title>
        <authorList>
            <person name="Kelkar D.S."/>
            <person name="Kumar D."/>
            <person name="Kumar P."/>
            <person name="Balakrishnan L."/>
            <person name="Muthusamy B."/>
            <person name="Yadav A.K."/>
            <person name="Shrivastava P."/>
            <person name="Marimuthu A."/>
            <person name="Anand S."/>
            <person name="Sundaram H."/>
            <person name="Kingsbury R."/>
            <person name="Harsha H.C."/>
            <person name="Nair B."/>
            <person name="Prasad T.S."/>
            <person name="Chauhan D.S."/>
            <person name="Katoch K."/>
            <person name="Katoch V.M."/>
            <person name="Kumar P."/>
            <person name="Chaerkady R."/>
            <person name="Ramachandran S."/>
            <person name="Dash D."/>
            <person name="Pandey A."/>
        </authorList>
    </citation>
    <scope>IDENTIFICATION BY MASS SPECTROMETRY [LARGE SCALE ANALYSIS]</scope>
    <source>
        <strain>ATCC 25618 / H37Rv</strain>
    </source>
</reference>
<dbReference type="EC" id="6.3.4.21"/>
<dbReference type="EMBL" id="AL123456">
    <property type="protein sequence ID" value="CCP43311.1"/>
    <property type="molecule type" value="Genomic_DNA"/>
</dbReference>
<dbReference type="PIR" id="D70933">
    <property type="entry name" value="D70933"/>
</dbReference>
<dbReference type="RefSeq" id="NP_215087.1">
    <property type="nucleotide sequence ID" value="NC_000962.3"/>
</dbReference>
<dbReference type="RefSeq" id="WP_003403007.1">
    <property type="nucleotide sequence ID" value="NZ_NVQJ01000036.1"/>
</dbReference>
<dbReference type="SMR" id="P9WJI7"/>
<dbReference type="FunCoup" id="P9WJI7">
    <property type="interactions" value="400"/>
</dbReference>
<dbReference type="STRING" id="83332.Rv0573c"/>
<dbReference type="PaxDb" id="83332-Rv0573c"/>
<dbReference type="DNASU" id="887716"/>
<dbReference type="GeneID" id="887716"/>
<dbReference type="KEGG" id="mtu:Rv0573c"/>
<dbReference type="KEGG" id="mtv:RVBD_0573c"/>
<dbReference type="TubercuList" id="Rv0573c"/>
<dbReference type="eggNOG" id="COG1488">
    <property type="taxonomic scope" value="Bacteria"/>
</dbReference>
<dbReference type="InParanoid" id="P9WJI7"/>
<dbReference type="OrthoDB" id="9770610at2"/>
<dbReference type="PhylomeDB" id="P9WJI7"/>
<dbReference type="UniPathway" id="UPA00253">
    <property type="reaction ID" value="UER00457"/>
</dbReference>
<dbReference type="Proteomes" id="UP000001584">
    <property type="component" value="Chromosome"/>
</dbReference>
<dbReference type="GO" id="GO:0005829">
    <property type="term" value="C:cytosol"/>
    <property type="evidence" value="ECO:0000318"/>
    <property type="project" value="GO_Central"/>
</dbReference>
<dbReference type="GO" id="GO:0005886">
    <property type="term" value="C:plasma membrane"/>
    <property type="evidence" value="ECO:0007005"/>
    <property type="project" value="MTBBASE"/>
</dbReference>
<dbReference type="GO" id="GO:0047280">
    <property type="term" value="F:nicotinamide phosphoribosyltransferase activity"/>
    <property type="evidence" value="ECO:0000314"/>
    <property type="project" value="MTBBASE"/>
</dbReference>
<dbReference type="GO" id="GO:0004516">
    <property type="term" value="F:nicotinate phosphoribosyltransferase activity"/>
    <property type="evidence" value="ECO:0000314"/>
    <property type="project" value="MTBBASE"/>
</dbReference>
<dbReference type="GO" id="GO:0009435">
    <property type="term" value="P:NAD biosynthetic process"/>
    <property type="evidence" value="ECO:0000315"/>
    <property type="project" value="MTBBASE"/>
</dbReference>
<dbReference type="GO" id="GO:0034355">
    <property type="term" value="P:NAD biosynthetic process via the salvage pathway"/>
    <property type="evidence" value="ECO:0000315"/>
    <property type="project" value="MTBBASE"/>
</dbReference>
<dbReference type="GO" id="GO:0075136">
    <property type="term" value="P:response to host"/>
    <property type="evidence" value="ECO:0000270"/>
    <property type="project" value="MTBBASE"/>
</dbReference>
<dbReference type="GO" id="GO:0001666">
    <property type="term" value="P:response to hypoxia"/>
    <property type="evidence" value="ECO:0000270"/>
    <property type="project" value="MTBBASE"/>
</dbReference>
<dbReference type="CDD" id="cd01570">
    <property type="entry name" value="NAPRTase_A"/>
    <property type="match status" value="1"/>
</dbReference>
<dbReference type="FunFam" id="3.20.20.70:FF:000076">
    <property type="entry name" value="Nicotinate phosphoribosyltransferase"/>
    <property type="match status" value="1"/>
</dbReference>
<dbReference type="Gene3D" id="3.20.20.70">
    <property type="entry name" value="Aldolase class I"/>
    <property type="match status" value="1"/>
</dbReference>
<dbReference type="Gene3D" id="3.20.140.10">
    <property type="entry name" value="nicotinate phosphoribosyltransferase"/>
    <property type="match status" value="1"/>
</dbReference>
<dbReference type="InterPro" id="IPR013785">
    <property type="entry name" value="Aldolase_TIM"/>
</dbReference>
<dbReference type="InterPro" id="IPR041525">
    <property type="entry name" value="N/Namide_PRibTrfase"/>
</dbReference>
<dbReference type="InterPro" id="IPR040727">
    <property type="entry name" value="NAPRTase_N"/>
</dbReference>
<dbReference type="InterPro" id="IPR007229">
    <property type="entry name" value="Nic_PRibTrfase-Fam"/>
</dbReference>
<dbReference type="InterPro" id="IPR006405">
    <property type="entry name" value="Nic_PRibTrfase_pncB"/>
</dbReference>
<dbReference type="InterPro" id="IPR036068">
    <property type="entry name" value="Nicotinate_pribotase-like_C"/>
</dbReference>
<dbReference type="NCBIfam" id="TIGR01513">
    <property type="entry name" value="NAPRTase_put"/>
    <property type="match status" value="1"/>
</dbReference>
<dbReference type="NCBIfam" id="NF006696">
    <property type="entry name" value="PRK09243.1-3"/>
    <property type="match status" value="1"/>
</dbReference>
<dbReference type="NCBIfam" id="NF009131">
    <property type="entry name" value="PRK12484.1"/>
    <property type="match status" value="1"/>
</dbReference>
<dbReference type="PANTHER" id="PTHR11098">
    <property type="entry name" value="NICOTINATE PHOSPHORIBOSYLTRANSFERASE"/>
    <property type="match status" value="1"/>
</dbReference>
<dbReference type="PANTHER" id="PTHR11098:SF1">
    <property type="entry name" value="NICOTINATE PHOSPHORIBOSYLTRANSFERASE"/>
    <property type="match status" value="1"/>
</dbReference>
<dbReference type="Pfam" id="PF04095">
    <property type="entry name" value="NAPRTase"/>
    <property type="match status" value="1"/>
</dbReference>
<dbReference type="Pfam" id="PF17767">
    <property type="entry name" value="NAPRTase_N"/>
    <property type="match status" value="1"/>
</dbReference>
<dbReference type="PIRSF" id="PIRSF000484">
    <property type="entry name" value="NAPRT"/>
    <property type="match status" value="1"/>
</dbReference>
<dbReference type="SUPFAM" id="SSF51690">
    <property type="entry name" value="Nicotinate/Quinolinate PRTase C-terminal domain-like"/>
    <property type="match status" value="1"/>
</dbReference>
<dbReference type="SUPFAM" id="SSF54675">
    <property type="entry name" value="Nicotinate/Quinolinate PRTase N-terminal domain-like"/>
    <property type="match status" value="1"/>
</dbReference>
<keyword id="KW-0436">Ligase</keyword>
<keyword id="KW-0597">Phosphoprotein</keyword>
<keyword id="KW-0662">Pyridine nucleotide biosynthesis</keyword>
<keyword id="KW-1185">Reference proteome</keyword>
<keyword id="KW-0808">Transferase</keyword>
<name>PNCB2_MYCTU</name>
<feature type="chain" id="PRO_0000392685" description="Nicotinate phosphoribosyltransferase pncB2">
    <location>
        <begin position="1"/>
        <end position="463"/>
    </location>
</feature>
<feature type="modified residue" description="Phosphohistidine" evidence="1">
    <location>
        <position position="202"/>
    </location>
</feature>
<sequence>MAIRQHVGALFTDLYEVTMAQAYWAERMSGTAVFEIFFRKLPPGRSYIMAAGLADVVEFLEAFRFDEQDLRYLRGLGQFSDEFLRWLAGVRFTGDVWAAPEGTVIFPNEPAVQLIAPIIEAQLVETFVLNQIHLQSVLASKAARVVAAARGRPVVDFGARRAHGTDAACKVARTSYLAGAAGTSNLLAARQYGIPTFGTMAHSFVQAFDSEVAAFEAFARLYPATMLLVDTYDTLRGVDHVIELAKRLGNRFDVRAVRLDSGDLDELSKATRARLDTAGLEQVEIFASSGLDENRIAALLAARCPIDGFGVGTQLVVAQDAPALDMAYKLVAYDGSGRTKFSSGKVIYPGRKQVFRKLEHGVFCGDTLGEHGENLPGDPLLVPIMTNGRRIRQHAPTLDGARDWARQQIDALPPELRSLEDTGYSYPVAVSDRIVGELARLRHADTAEAHPGSNVVGAKAKRP</sequence>
<proteinExistence type="evidence at protein level"/>
<comment type="function">
    <text evidence="5">Involved in the Preiss-Handler pathway, which is a recycling route that permits the salvage of free nicotinamide (NM) and nicotinic acid (Na) involved in the NAD biosynthesis. Catalyzes the synthesis of beta-nicotinate D-ribonucleotide from nicotinate and 5-phospho-D-ribose 1-phosphate at the expense of ATP. It is not able to use nicotinamide. PncB2 appears to be responsible for the increased salvage synthesis of NAD during infection of host tissues.</text>
</comment>
<comment type="catalytic activity">
    <reaction evidence="5">
        <text>nicotinate + 5-phospho-alpha-D-ribose 1-diphosphate + ATP + H2O = nicotinate beta-D-ribonucleotide + ADP + phosphate + diphosphate</text>
        <dbReference type="Rhea" id="RHEA:36163"/>
        <dbReference type="ChEBI" id="CHEBI:15377"/>
        <dbReference type="ChEBI" id="CHEBI:30616"/>
        <dbReference type="ChEBI" id="CHEBI:32544"/>
        <dbReference type="ChEBI" id="CHEBI:33019"/>
        <dbReference type="ChEBI" id="CHEBI:43474"/>
        <dbReference type="ChEBI" id="CHEBI:57502"/>
        <dbReference type="ChEBI" id="CHEBI:58017"/>
        <dbReference type="ChEBI" id="CHEBI:456216"/>
        <dbReference type="EC" id="6.3.4.21"/>
    </reaction>
</comment>
<comment type="pathway">
    <text>Cofactor biosynthesis; NAD(+) biosynthesis; nicotinate D-ribonucleotide from nicotinate: step 1/1.</text>
</comment>
<comment type="induction">
    <text evidence="2 3 4 5">A member of the dormancy regulon. Induced in response to reduced oxygen tension (hypoxia), low levels of nitric oxide (NO) and carbon monoxide (CO). It is hoped that this regulon will give insight into the latent, or dormant phase of infection.</text>
</comment>
<comment type="PTM">
    <text evidence="1">Transiently phosphorylated on a His residue during the reaction cycle. Phosphorylation strongly increases the affinity for substrates and increases the rate of nicotinate D-ribonucleotide production. Dephosphorylation regenerates the low-affinity form of the enzyme, leading to product release.</text>
</comment>
<comment type="disruption phenotype">
    <text evidence="5">Double mutants lacking both pncB1 and pncB2 show an absence of incorporation of nicotinamide.</text>
</comment>
<comment type="similarity">
    <text evidence="6">Belongs to the NAPRTase family.</text>
</comment>
<gene>
    <name type="primary">pncB2</name>
    <name type="ordered locus">Rv0573c</name>
</gene>
<evidence type="ECO:0000250" key="1">
    <source>
        <dbReference type="UniProtKB" id="P22253"/>
    </source>
</evidence>
<evidence type="ECO:0000269" key="2">
    <source>
    </source>
</evidence>
<evidence type="ECO:0000269" key="3">
    <source>
    </source>
</evidence>
<evidence type="ECO:0000269" key="4">
    <source>
    </source>
</evidence>
<evidence type="ECO:0000269" key="5">
    <source>
    </source>
</evidence>
<evidence type="ECO:0000305" key="6"/>
<accession>P9WJI7</accession>
<accession>L0T470</accession>
<accession>O53770</accession>
<accession>Q7D9M0</accession>